<gene>
    <name type="primary">Tpi</name>
    <name type="ORF">CG2171</name>
</gene>
<accession>P29613</accession>
<accession>O76995</accession>
<accession>Q0KHY9</accession>
<accession>Q6NLI5</accession>
<accession>Q7JNU4</accession>
<accession>Q8IMJ1</accession>
<accession>Q9TY56</accession>
<sequence>MSRKFCVGGNWKMNGDQKSIAEIAKTLSSAALDPNTEVVIGCPAIYLMYARNLLPCELGLAGQNAYKVAKGAFTGEISPAMLKDIGADWVILGHSERRAIFGESDALIAEKAEHALAEGLKVIACIGETLEEREAGKTNEVVARQMCAYAQKIKDWKNVVVAYEPVWAIGTGQTATPDQAQEVHAFLRQWLSDNISKEVSASLRIQYGGSVTAANAKELAKKPDIDGFLVGGASLKPEFVDIINARQ</sequence>
<keyword id="KW-0025">Alternative splicing</keyword>
<keyword id="KW-0903">Direct protein sequencing</keyword>
<keyword id="KW-0312">Gluconeogenesis</keyword>
<keyword id="KW-0324">Glycolysis</keyword>
<keyword id="KW-0413">Isomerase</keyword>
<keyword id="KW-1185">Reference proteome</keyword>
<organism>
    <name type="scientific">Drosophila melanogaster</name>
    <name type="common">Fruit fly</name>
    <dbReference type="NCBI Taxonomy" id="7227"/>
    <lineage>
        <taxon>Eukaryota</taxon>
        <taxon>Metazoa</taxon>
        <taxon>Ecdysozoa</taxon>
        <taxon>Arthropoda</taxon>
        <taxon>Hexapoda</taxon>
        <taxon>Insecta</taxon>
        <taxon>Pterygota</taxon>
        <taxon>Neoptera</taxon>
        <taxon>Endopterygota</taxon>
        <taxon>Diptera</taxon>
        <taxon>Brachycera</taxon>
        <taxon>Muscomorpha</taxon>
        <taxon>Ephydroidea</taxon>
        <taxon>Drosophilidae</taxon>
        <taxon>Drosophila</taxon>
        <taxon>Sophophora</taxon>
    </lineage>
</organism>
<protein>
    <recommendedName>
        <fullName>Triosephosphate isomerase</fullName>
        <shortName>TIM</shortName>
        <ecNumber>5.3.1.1</ecNumber>
    </recommendedName>
    <alternativeName>
        <fullName>Triose-phosphate isomerase</fullName>
    </alternativeName>
</protein>
<proteinExistence type="evidence at protein level"/>
<feature type="chain" id="PRO_0000090130" description="Triosephosphate isomerase">
    <location>
        <begin position="1"/>
        <end position="247"/>
    </location>
</feature>
<feature type="active site" description="Electrophile" evidence="1">
    <location>
        <position position="94"/>
    </location>
</feature>
<feature type="active site" description="Proton acceptor" evidence="1">
    <location>
        <position position="164"/>
    </location>
</feature>
<feature type="binding site" evidence="1">
    <location>
        <position position="10"/>
    </location>
    <ligand>
        <name>substrate</name>
    </ligand>
</feature>
<feature type="binding site" evidence="1">
    <location>
        <position position="12"/>
    </location>
    <ligand>
        <name>substrate</name>
    </ligand>
</feature>
<feature type="splice variant" id="VSP_015659" description="In isoform A." evidence="4">
    <original>M</original>
    <variation>MPPGVLNDLNRNGIQCIASVTLLQRFPYHRNHHTIPTMDQNRPTVGGVTAEVLKAVVSEALLGKFTAVFPKLFKCQWKTYEGQKKFYANFSTDCTDSNSNNM</variation>
    <location>
        <position position="1"/>
    </location>
</feature>
<feature type="sequence variant" description="In strain: 178.7, 709.6, A-26, DPF-13, DPF-2, DPF-30, DPF-46, DPF-53, DPF-62, DPF-77, DPF-81, DPF-82.1, EM-10, Mali-10.2, Mali-4.2, Mali-4.4, Oregon-R, R-60, VC-805, VC-815, Z-1, Z-35, Z-44, Z-48 and Z-5." evidence="2 3">
    <original>Q</original>
    <variation>K</variation>
    <location>
        <position position="173"/>
    </location>
</feature>
<feature type="sequence variant" description="In strain: 709.6." evidence="3">
    <original>V</original>
    <variation>F</variation>
    <location>
        <position position="230"/>
    </location>
</feature>
<feature type="sequence conflict" description="In Ref. 1; CAA40804." evidence="5" ref="1">
    <original>F</original>
    <variation>S</variation>
    <location>
        <position position="186"/>
    </location>
</feature>
<feature type="sequence conflict" description="In Ref. 1; CAA40804." evidence="5" ref="1">
    <original>V</original>
    <variation>L</variation>
    <location>
        <position position="240"/>
    </location>
</feature>
<feature type="sequence conflict" description="In Ref. 5; AAS77472." evidence="5" ref="5">
    <original>N</original>
    <variation>I</variation>
    <location sequence="P29613-1">
        <position position="12"/>
    </location>
</feature>
<reference key="1">
    <citation type="journal article" date="1991" name="Mol. Gen. Genet.">
        <title>Structure and expression of the triose phosphate isomerase (Tpi) gene of Drosophila melanogaster.</title>
        <authorList>
            <person name="Shaw-Lee R.L."/>
            <person name="Lissemore J.L."/>
            <person name="Sullivan D.T."/>
        </authorList>
    </citation>
    <scope>NUCLEOTIDE SEQUENCE [GENOMIC DNA]</scope>
    <scope>DEVELOPMENTAL STAGE</scope>
    <scope>VARIANT LYS-173</scope>
    <source>
        <strain>Oregon-R</strain>
    </source>
</reference>
<reference key="2">
    <citation type="journal article" date="1998" name="Mol. Biol. Evol.">
        <title>Nucleotide variation in the triosephosphate isomerase (Tpi) locus of Drosophila melanogaster and D. simulans.</title>
        <authorList>
            <person name="Hasson E."/>
            <person name="Wang I.-N."/>
            <person name="Zeng L.-W."/>
            <person name="Kreitman M."/>
            <person name="Eanes W.F."/>
        </authorList>
    </citation>
    <scope>NUCLEOTIDE SEQUENCE [GENOMIC DNA]</scope>
    <scope>VARIANTS LYS-173 AND PHE-230</scope>
    <source>
        <strain>178.7</strain>
        <strain>709.6</strain>
        <strain>A-26</strain>
        <strain>DPF-13</strain>
        <strain>DPF-2</strain>
        <strain>DPF-30</strain>
        <strain>DPF-46</strain>
        <strain>DPF-53</strain>
        <strain>DPF-62</strain>
        <strain>DPF-77</strain>
        <strain>DPF-81</strain>
        <strain>DPF-82.1</strain>
        <strain>EM-10</strain>
        <strain>Mali-10.2</strain>
        <strain>Mali-4.2</strain>
        <strain>Mali-4.4</strain>
        <strain>Oregon-R</strain>
        <strain>R-60</strain>
        <strain>VC-805</strain>
        <strain>VC-815</strain>
        <strain>Z-1</strain>
        <strain>Z-35</strain>
        <strain>Z-44</strain>
        <strain>Z-48</strain>
        <strain>Z-5</strain>
    </source>
</reference>
<reference key="3">
    <citation type="journal article" date="2000" name="Science">
        <title>The genome sequence of Drosophila melanogaster.</title>
        <authorList>
            <person name="Adams M.D."/>
            <person name="Celniker S.E."/>
            <person name="Holt R.A."/>
            <person name="Evans C.A."/>
            <person name="Gocayne J.D."/>
            <person name="Amanatides P.G."/>
            <person name="Scherer S.E."/>
            <person name="Li P.W."/>
            <person name="Hoskins R.A."/>
            <person name="Galle R.F."/>
            <person name="George R.A."/>
            <person name="Lewis S.E."/>
            <person name="Richards S."/>
            <person name="Ashburner M."/>
            <person name="Henderson S.N."/>
            <person name="Sutton G.G."/>
            <person name="Wortman J.R."/>
            <person name="Yandell M.D."/>
            <person name="Zhang Q."/>
            <person name="Chen L.X."/>
            <person name="Brandon R.C."/>
            <person name="Rogers Y.-H.C."/>
            <person name="Blazej R.G."/>
            <person name="Champe M."/>
            <person name="Pfeiffer B.D."/>
            <person name="Wan K.H."/>
            <person name="Doyle C."/>
            <person name="Baxter E.G."/>
            <person name="Helt G."/>
            <person name="Nelson C.R."/>
            <person name="Miklos G.L.G."/>
            <person name="Abril J.F."/>
            <person name="Agbayani A."/>
            <person name="An H.-J."/>
            <person name="Andrews-Pfannkoch C."/>
            <person name="Baldwin D."/>
            <person name="Ballew R.M."/>
            <person name="Basu A."/>
            <person name="Baxendale J."/>
            <person name="Bayraktaroglu L."/>
            <person name="Beasley E.M."/>
            <person name="Beeson K.Y."/>
            <person name="Benos P.V."/>
            <person name="Berman B.P."/>
            <person name="Bhandari D."/>
            <person name="Bolshakov S."/>
            <person name="Borkova D."/>
            <person name="Botchan M.R."/>
            <person name="Bouck J."/>
            <person name="Brokstein P."/>
            <person name="Brottier P."/>
            <person name="Burtis K.C."/>
            <person name="Busam D.A."/>
            <person name="Butler H."/>
            <person name="Cadieu E."/>
            <person name="Center A."/>
            <person name="Chandra I."/>
            <person name="Cherry J.M."/>
            <person name="Cawley S."/>
            <person name="Dahlke C."/>
            <person name="Davenport L.B."/>
            <person name="Davies P."/>
            <person name="de Pablos B."/>
            <person name="Delcher A."/>
            <person name="Deng Z."/>
            <person name="Mays A.D."/>
            <person name="Dew I."/>
            <person name="Dietz S.M."/>
            <person name="Dodson K."/>
            <person name="Doup L.E."/>
            <person name="Downes M."/>
            <person name="Dugan-Rocha S."/>
            <person name="Dunkov B.C."/>
            <person name="Dunn P."/>
            <person name="Durbin K.J."/>
            <person name="Evangelista C.C."/>
            <person name="Ferraz C."/>
            <person name="Ferriera S."/>
            <person name="Fleischmann W."/>
            <person name="Fosler C."/>
            <person name="Gabrielian A.E."/>
            <person name="Garg N.S."/>
            <person name="Gelbart W.M."/>
            <person name="Glasser K."/>
            <person name="Glodek A."/>
            <person name="Gong F."/>
            <person name="Gorrell J.H."/>
            <person name="Gu Z."/>
            <person name="Guan P."/>
            <person name="Harris M."/>
            <person name="Harris N.L."/>
            <person name="Harvey D.A."/>
            <person name="Heiman T.J."/>
            <person name="Hernandez J.R."/>
            <person name="Houck J."/>
            <person name="Hostin D."/>
            <person name="Houston K.A."/>
            <person name="Howland T.J."/>
            <person name="Wei M.-H."/>
            <person name="Ibegwam C."/>
            <person name="Jalali M."/>
            <person name="Kalush F."/>
            <person name="Karpen G.H."/>
            <person name="Ke Z."/>
            <person name="Kennison J.A."/>
            <person name="Ketchum K.A."/>
            <person name="Kimmel B.E."/>
            <person name="Kodira C.D."/>
            <person name="Kraft C.L."/>
            <person name="Kravitz S."/>
            <person name="Kulp D."/>
            <person name="Lai Z."/>
            <person name="Lasko P."/>
            <person name="Lei Y."/>
            <person name="Levitsky A.A."/>
            <person name="Li J.H."/>
            <person name="Li Z."/>
            <person name="Liang Y."/>
            <person name="Lin X."/>
            <person name="Liu X."/>
            <person name="Mattei B."/>
            <person name="McIntosh T.C."/>
            <person name="McLeod M.P."/>
            <person name="McPherson D."/>
            <person name="Merkulov G."/>
            <person name="Milshina N.V."/>
            <person name="Mobarry C."/>
            <person name="Morris J."/>
            <person name="Moshrefi A."/>
            <person name="Mount S.M."/>
            <person name="Moy M."/>
            <person name="Murphy B."/>
            <person name="Murphy L."/>
            <person name="Muzny D.M."/>
            <person name="Nelson D.L."/>
            <person name="Nelson D.R."/>
            <person name="Nelson K.A."/>
            <person name="Nixon K."/>
            <person name="Nusskern D.R."/>
            <person name="Pacleb J.M."/>
            <person name="Palazzolo M."/>
            <person name="Pittman G.S."/>
            <person name="Pan S."/>
            <person name="Pollard J."/>
            <person name="Puri V."/>
            <person name="Reese M.G."/>
            <person name="Reinert K."/>
            <person name="Remington K."/>
            <person name="Saunders R.D.C."/>
            <person name="Scheeler F."/>
            <person name="Shen H."/>
            <person name="Shue B.C."/>
            <person name="Siden-Kiamos I."/>
            <person name="Simpson M."/>
            <person name="Skupski M.P."/>
            <person name="Smith T.J."/>
            <person name="Spier E."/>
            <person name="Spradling A.C."/>
            <person name="Stapleton M."/>
            <person name="Strong R."/>
            <person name="Sun E."/>
            <person name="Svirskas R."/>
            <person name="Tector C."/>
            <person name="Turner R."/>
            <person name="Venter E."/>
            <person name="Wang A.H."/>
            <person name="Wang X."/>
            <person name="Wang Z.-Y."/>
            <person name="Wassarman D.A."/>
            <person name="Weinstock G.M."/>
            <person name="Weissenbach J."/>
            <person name="Williams S.M."/>
            <person name="Woodage T."/>
            <person name="Worley K.C."/>
            <person name="Wu D."/>
            <person name="Yang S."/>
            <person name="Yao Q.A."/>
            <person name="Ye J."/>
            <person name="Yeh R.-F."/>
            <person name="Zaveri J.S."/>
            <person name="Zhan M."/>
            <person name="Zhang G."/>
            <person name="Zhao Q."/>
            <person name="Zheng L."/>
            <person name="Zheng X.H."/>
            <person name="Zhong F.N."/>
            <person name="Zhong W."/>
            <person name="Zhou X."/>
            <person name="Zhu S.C."/>
            <person name="Zhu X."/>
            <person name="Smith H.O."/>
            <person name="Gibbs R.A."/>
            <person name="Myers E.W."/>
            <person name="Rubin G.M."/>
            <person name="Venter J.C."/>
        </authorList>
    </citation>
    <scope>NUCLEOTIDE SEQUENCE [LARGE SCALE GENOMIC DNA]</scope>
    <source>
        <strain>Berkeley</strain>
    </source>
</reference>
<reference key="4">
    <citation type="journal article" date="2002" name="Genome Biol.">
        <title>Annotation of the Drosophila melanogaster euchromatic genome: a systematic review.</title>
        <authorList>
            <person name="Misra S."/>
            <person name="Crosby M.A."/>
            <person name="Mungall C.J."/>
            <person name="Matthews B.B."/>
            <person name="Campbell K.S."/>
            <person name="Hradecky P."/>
            <person name="Huang Y."/>
            <person name="Kaminker J.S."/>
            <person name="Millburn G.H."/>
            <person name="Prochnik S.E."/>
            <person name="Smith C.D."/>
            <person name="Tupy J.L."/>
            <person name="Whitfield E.J."/>
            <person name="Bayraktaroglu L."/>
            <person name="Berman B.P."/>
            <person name="Bettencourt B.R."/>
            <person name="Celniker S.E."/>
            <person name="de Grey A.D.N.J."/>
            <person name="Drysdale R.A."/>
            <person name="Harris N.L."/>
            <person name="Richter J."/>
            <person name="Russo S."/>
            <person name="Schroeder A.J."/>
            <person name="Shu S.Q."/>
            <person name="Stapleton M."/>
            <person name="Yamada C."/>
            <person name="Ashburner M."/>
            <person name="Gelbart W.M."/>
            <person name="Rubin G.M."/>
            <person name="Lewis S.E."/>
        </authorList>
    </citation>
    <scope>GENOME REANNOTATION</scope>
    <scope>ALTERNATIVE SPLICING</scope>
    <source>
        <strain>Berkeley</strain>
    </source>
</reference>
<reference key="5">
    <citation type="submission" date="2004-05" db="EMBL/GenBank/DDBJ databases">
        <authorList>
            <person name="Stapleton M."/>
            <person name="Carlson J.W."/>
            <person name="Chavez C."/>
            <person name="Frise E."/>
            <person name="George R.A."/>
            <person name="Pacleb J.M."/>
            <person name="Park S."/>
            <person name="Wan K.H."/>
            <person name="Yu C."/>
            <person name="Rubin G.M."/>
            <person name="Celniker S.E."/>
        </authorList>
    </citation>
    <scope>NUCLEOTIDE SEQUENCE [LARGE SCALE MRNA] (ISOFORMS A AND B)</scope>
    <source>
        <strain>Berkeley</strain>
        <tissue>Head</tissue>
        <tissue>Testis</tissue>
    </source>
</reference>
<reference key="6">
    <citation type="journal article" date="1993" name="Exp. Cell Res.">
        <title>Identification of Drosophila wing imaginal disc proteins by two-dimensional gel analysis and microsequencing.</title>
        <authorList>
            <person name="Santaren J.F."/>
            <person name="van Damme J."/>
            <person name="Puype M."/>
            <person name="Vandekerckhove J."/>
            <person name="Garcia-Bellido A."/>
        </authorList>
    </citation>
    <scope>PROTEIN SEQUENCE OF 158-170</scope>
    <source>
        <strain>Vallecas</strain>
        <tissue>Wing imaginal disk</tissue>
    </source>
</reference>
<dbReference type="EC" id="5.3.1.1"/>
<dbReference type="EMBL" id="X57576">
    <property type="protein sequence ID" value="CAA40804.1"/>
    <property type="molecule type" value="Genomic_DNA"/>
</dbReference>
<dbReference type="EMBL" id="U60836">
    <property type="protein sequence ID" value="AAC39041.1"/>
    <property type="molecule type" value="Genomic_DNA"/>
</dbReference>
<dbReference type="EMBL" id="U60837">
    <property type="protein sequence ID" value="AAC39042.1"/>
    <property type="molecule type" value="Genomic_DNA"/>
</dbReference>
<dbReference type="EMBL" id="U60838">
    <property type="protein sequence ID" value="AAC39043.1"/>
    <property type="molecule type" value="Genomic_DNA"/>
</dbReference>
<dbReference type="EMBL" id="U60839">
    <property type="protein sequence ID" value="AAC39044.1"/>
    <property type="molecule type" value="Genomic_DNA"/>
</dbReference>
<dbReference type="EMBL" id="U60840">
    <property type="protein sequence ID" value="AAC39045.1"/>
    <property type="molecule type" value="Genomic_DNA"/>
</dbReference>
<dbReference type="EMBL" id="U60841">
    <property type="protein sequence ID" value="AAC39046.1"/>
    <property type="molecule type" value="Genomic_DNA"/>
</dbReference>
<dbReference type="EMBL" id="U60842">
    <property type="protein sequence ID" value="AAC39047.1"/>
    <property type="molecule type" value="Genomic_DNA"/>
</dbReference>
<dbReference type="EMBL" id="U60843">
    <property type="protein sequence ID" value="AAC39048.1"/>
    <property type="molecule type" value="Genomic_DNA"/>
</dbReference>
<dbReference type="EMBL" id="U60844">
    <property type="protein sequence ID" value="AAC39049.1"/>
    <property type="molecule type" value="Genomic_DNA"/>
</dbReference>
<dbReference type="EMBL" id="U60845">
    <property type="protein sequence ID" value="AAC39050.1"/>
    <property type="molecule type" value="Genomic_DNA"/>
</dbReference>
<dbReference type="EMBL" id="U60846">
    <property type="protein sequence ID" value="AAC39051.1"/>
    <property type="molecule type" value="Genomic_DNA"/>
</dbReference>
<dbReference type="EMBL" id="U60847">
    <property type="protein sequence ID" value="AAC39052.1"/>
    <property type="molecule type" value="Genomic_DNA"/>
</dbReference>
<dbReference type="EMBL" id="U60848">
    <property type="protein sequence ID" value="AAC39053.1"/>
    <property type="molecule type" value="Genomic_DNA"/>
</dbReference>
<dbReference type="EMBL" id="U60849">
    <property type="protein sequence ID" value="AAC39054.1"/>
    <property type="molecule type" value="Genomic_DNA"/>
</dbReference>
<dbReference type="EMBL" id="U60850">
    <property type="protein sequence ID" value="AAC39055.1"/>
    <property type="molecule type" value="Genomic_DNA"/>
</dbReference>
<dbReference type="EMBL" id="U60851">
    <property type="protein sequence ID" value="AAC39056.1"/>
    <property type="molecule type" value="Genomic_DNA"/>
</dbReference>
<dbReference type="EMBL" id="U60852">
    <property type="protein sequence ID" value="AAC39057.1"/>
    <property type="molecule type" value="Genomic_DNA"/>
</dbReference>
<dbReference type="EMBL" id="U60853">
    <property type="protein sequence ID" value="AAC39058.1"/>
    <property type="molecule type" value="Genomic_DNA"/>
</dbReference>
<dbReference type="EMBL" id="U60854">
    <property type="protein sequence ID" value="AAC39059.1"/>
    <property type="molecule type" value="Genomic_DNA"/>
</dbReference>
<dbReference type="EMBL" id="U60855">
    <property type="protein sequence ID" value="AAC39060.1"/>
    <property type="molecule type" value="Genomic_DNA"/>
</dbReference>
<dbReference type="EMBL" id="U60856">
    <property type="protein sequence ID" value="AAC39061.1"/>
    <property type="molecule type" value="Genomic_DNA"/>
</dbReference>
<dbReference type="EMBL" id="U60857">
    <property type="protein sequence ID" value="AAC39062.1"/>
    <property type="molecule type" value="Genomic_DNA"/>
</dbReference>
<dbReference type="EMBL" id="U60858">
    <property type="protein sequence ID" value="AAC39063.1"/>
    <property type="molecule type" value="Genomic_DNA"/>
</dbReference>
<dbReference type="EMBL" id="U60859">
    <property type="protein sequence ID" value="AAC39064.1"/>
    <property type="molecule type" value="Genomic_DNA"/>
</dbReference>
<dbReference type="EMBL" id="U60860">
    <property type="protein sequence ID" value="AAC39065.1"/>
    <property type="molecule type" value="Genomic_DNA"/>
</dbReference>
<dbReference type="EMBL" id="AE014297">
    <property type="protein sequence ID" value="AAN14218.1"/>
    <property type="molecule type" value="Genomic_DNA"/>
</dbReference>
<dbReference type="EMBL" id="AE014297">
    <property type="protein sequence ID" value="AAN14219.1"/>
    <property type="molecule type" value="Genomic_DNA"/>
</dbReference>
<dbReference type="EMBL" id="BT012347">
    <property type="protein sequence ID" value="AAS77472.1"/>
    <property type="molecule type" value="mRNA"/>
</dbReference>
<dbReference type="EMBL" id="BT014664">
    <property type="protein sequence ID" value="AAT27288.1"/>
    <property type="molecule type" value="mRNA"/>
</dbReference>
<dbReference type="PIR" id="S18604">
    <property type="entry name" value="S18604"/>
</dbReference>
<dbReference type="RefSeq" id="NP_788764.1">
    <molecule id="P29613-1"/>
    <property type="nucleotide sequence ID" value="NM_176587.2"/>
</dbReference>
<dbReference type="RefSeq" id="NP_788765.1">
    <molecule id="P29613-2"/>
    <property type="nucleotide sequence ID" value="NM_176588.2"/>
</dbReference>
<dbReference type="RefSeq" id="NP_788766.1">
    <molecule id="P29613-2"/>
    <property type="nucleotide sequence ID" value="NM_176589.2"/>
</dbReference>
<dbReference type="SMR" id="P29613"/>
<dbReference type="BioGRID" id="68438">
    <property type="interactions" value="23"/>
</dbReference>
<dbReference type="FunCoup" id="P29613">
    <property type="interactions" value="1175"/>
</dbReference>
<dbReference type="IntAct" id="P29613">
    <property type="interactions" value="34"/>
</dbReference>
<dbReference type="STRING" id="7227.FBpp0084948"/>
<dbReference type="GlyGen" id="P29613">
    <property type="glycosylation" value="1 site, 1 O-linked glycan (1 site)"/>
</dbReference>
<dbReference type="PaxDb" id="7227-FBpp0084948"/>
<dbReference type="DNASU" id="43582"/>
<dbReference type="EnsemblMetazoa" id="FBtr0085582">
    <molecule id="P29613-1"/>
    <property type="protein sequence ID" value="FBpp0084948"/>
    <property type="gene ID" value="FBgn0086355"/>
</dbReference>
<dbReference type="EnsemblMetazoa" id="FBtr0085583">
    <molecule id="P29613-2"/>
    <property type="protein sequence ID" value="FBpp0084949"/>
    <property type="gene ID" value="FBgn0086355"/>
</dbReference>
<dbReference type="EnsemblMetazoa" id="FBtr0085584">
    <molecule id="P29613-2"/>
    <property type="protein sequence ID" value="FBpp0084950"/>
    <property type="gene ID" value="FBgn0086355"/>
</dbReference>
<dbReference type="GeneID" id="43582"/>
<dbReference type="KEGG" id="dme:Dmel_CG2171"/>
<dbReference type="AGR" id="FB:FBgn0086355"/>
<dbReference type="CTD" id="43582"/>
<dbReference type="FlyBase" id="FBgn0086355">
    <property type="gene designation" value="Tpi"/>
</dbReference>
<dbReference type="VEuPathDB" id="VectorBase:FBgn0086355"/>
<dbReference type="eggNOG" id="KOG1643">
    <property type="taxonomic scope" value="Eukaryota"/>
</dbReference>
<dbReference type="GeneTree" id="ENSGT00390000013354"/>
<dbReference type="HOGENOM" id="CLU_024251_2_0_1"/>
<dbReference type="InParanoid" id="P29613"/>
<dbReference type="OMA" id="NWKMHMT"/>
<dbReference type="OrthoDB" id="6715177at2759"/>
<dbReference type="PhylomeDB" id="P29613"/>
<dbReference type="Reactome" id="R-DME-70171">
    <property type="pathway name" value="Glycolysis"/>
</dbReference>
<dbReference type="Reactome" id="R-DME-70263">
    <property type="pathway name" value="Gluconeogenesis"/>
</dbReference>
<dbReference type="SignaLink" id="P29613"/>
<dbReference type="UniPathway" id="UPA00109">
    <property type="reaction ID" value="UER00189"/>
</dbReference>
<dbReference type="UniPathway" id="UPA00138"/>
<dbReference type="BioGRID-ORCS" id="43582">
    <property type="hits" value="0 hits in 1 CRISPR screen"/>
</dbReference>
<dbReference type="GenomeRNAi" id="43582"/>
<dbReference type="PRO" id="PR:P29613"/>
<dbReference type="Proteomes" id="UP000000803">
    <property type="component" value="Chromosome 3R"/>
</dbReference>
<dbReference type="Bgee" id="FBgn0086355">
    <property type="expression patterns" value="Expressed in adult hindgut (Drosophila) and 272 other cell types or tissues"/>
</dbReference>
<dbReference type="ExpressionAtlas" id="P29613">
    <property type="expression patterns" value="baseline and differential"/>
</dbReference>
<dbReference type="GO" id="GO:0005829">
    <property type="term" value="C:cytosol"/>
    <property type="evidence" value="ECO:0000250"/>
    <property type="project" value="FlyBase"/>
</dbReference>
<dbReference type="GO" id="GO:0031430">
    <property type="term" value="C:M band"/>
    <property type="evidence" value="ECO:0000314"/>
    <property type="project" value="FlyBase"/>
</dbReference>
<dbReference type="GO" id="GO:0030018">
    <property type="term" value="C:Z disc"/>
    <property type="evidence" value="ECO:0000314"/>
    <property type="project" value="FlyBase"/>
</dbReference>
<dbReference type="GO" id="GO:0042803">
    <property type="term" value="F:protein homodimerization activity"/>
    <property type="evidence" value="ECO:0000314"/>
    <property type="project" value="FlyBase"/>
</dbReference>
<dbReference type="GO" id="GO:0004807">
    <property type="term" value="F:triose-phosphate isomerase activity"/>
    <property type="evidence" value="ECO:0000314"/>
    <property type="project" value="FlyBase"/>
</dbReference>
<dbReference type="GO" id="GO:0061621">
    <property type="term" value="P:canonical glycolysis"/>
    <property type="evidence" value="ECO:0000315"/>
    <property type="project" value="FlyBase"/>
</dbReference>
<dbReference type="GO" id="GO:0008340">
    <property type="term" value="P:determination of adult lifespan"/>
    <property type="evidence" value="ECO:0000315"/>
    <property type="project" value="FlyBase"/>
</dbReference>
<dbReference type="GO" id="GO:0006094">
    <property type="term" value="P:gluconeogenesis"/>
    <property type="evidence" value="ECO:0000250"/>
    <property type="project" value="FlyBase"/>
</dbReference>
<dbReference type="GO" id="GO:0042593">
    <property type="term" value="P:glucose homeostasis"/>
    <property type="evidence" value="ECO:0000315"/>
    <property type="project" value="FlyBase"/>
</dbReference>
<dbReference type="GO" id="GO:0046166">
    <property type="term" value="P:glyceraldehyde-3-phosphate biosynthetic process"/>
    <property type="evidence" value="ECO:0000318"/>
    <property type="project" value="GO_Central"/>
</dbReference>
<dbReference type="GO" id="GO:0019682">
    <property type="term" value="P:glyceraldehyde-3-phosphate metabolic process"/>
    <property type="evidence" value="ECO:0000315"/>
    <property type="project" value="FlyBase"/>
</dbReference>
<dbReference type="GO" id="GO:0019563">
    <property type="term" value="P:glycerol catabolic process"/>
    <property type="evidence" value="ECO:0000318"/>
    <property type="project" value="GO_Central"/>
</dbReference>
<dbReference type="GO" id="GO:0006096">
    <property type="term" value="P:glycolytic process"/>
    <property type="evidence" value="ECO:0000315"/>
    <property type="project" value="FlyBase"/>
</dbReference>
<dbReference type="GO" id="GO:0050877">
    <property type="term" value="P:nervous system process"/>
    <property type="evidence" value="ECO:0000315"/>
    <property type="project" value="FlyBase"/>
</dbReference>
<dbReference type="GO" id="GO:0009612">
    <property type="term" value="P:response to mechanical stimulus"/>
    <property type="evidence" value="ECO:0000315"/>
    <property type="project" value="FlyBase"/>
</dbReference>
<dbReference type="CDD" id="cd00311">
    <property type="entry name" value="TIM"/>
    <property type="match status" value="1"/>
</dbReference>
<dbReference type="FunFam" id="3.20.20.70:FF:000025">
    <property type="entry name" value="Triosephosphate isomerase"/>
    <property type="match status" value="1"/>
</dbReference>
<dbReference type="Gene3D" id="3.20.20.70">
    <property type="entry name" value="Aldolase class I"/>
    <property type="match status" value="1"/>
</dbReference>
<dbReference type="HAMAP" id="MF_00147_B">
    <property type="entry name" value="TIM_B"/>
    <property type="match status" value="1"/>
</dbReference>
<dbReference type="InterPro" id="IPR013785">
    <property type="entry name" value="Aldolase_TIM"/>
</dbReference>
<dbReference type="InterPro" id="IPR035990">
    <property type="entry name" value="TIM_sf"/>
</dbReference>
<dbReference type="InterPro" id="IPR022896">
    <property type="entry name" value="TrioseP_Isoase_bac/euk"/>
</dbReference>
<dbReference type="InterPro" id="IPR000652">
    <property type="entry name" value="Triosephosphate_isomerase"/>
</dbReference>
<dbReference type="InterPro" id="IPR020861">
    <property type="entry name" value="Triosephosphate_isomerase_AS"/>
</dbReference>
<dbReference type="NCBIfam" id="TIGR00419">
    <property type="entry name" value="tim"/>
    <property type="match status" value="1"/>
</dbReference>
<dbReference type="PANTHER" id="PTHR21139">
    <property type="entry name" value="TRIOSEPHOSPHATE ISOMERASE"/>
    <property type="match status" value="1"/>
</dbReference>
<dbReference type="PANTHER" id="PTHR21139:SF2">
    <property type="entry name" value="TRIOSEPHOSPHATE ISOMERASE"/>
    <property type="match status" value="1"/>
</dbReference>
<dbReference type="Pfam" id="PF00121">
    <property type="entry name" value="TIM"/>
    <property type="match status" value="1"/>
</dbReference>
<dbReference type="SUPFAM" id="SSF51351">
    <property type="entry name" value="Triosephosphate isomerase (TIM)"/>
    <property type="match status" value="1"/>
</dbReference>
<dbReference type="PROSITE" id="PS00171">
    <property type="entry name" value="TIM_1"/>
    <property type="match status" value="1"/>
</dbReference>
<dbReference type="PROSITE" id="PS51440">
    <property type="entry name" value="TIM_2"/>
    <property type="match status" value="1"/>
</dbReference>
<comment type="catalytic activity">
    <reaction>
        <text>D-glyceraldehyde 3-phosphate = dihydroxyacetone phosphate</text>
        <dbReference type="Rhea" id="RHEA:18585"/>
        <dbReference type="ChEBI" id="CHEBI:57642"/>
        <dbReference type="ChEBI" id="CHEBI:59776"/>
        <dbReference type="EC" id="5.3.1.1"/>
    </reaction>
</comment>
<comment type="pathway">
    <text>Carbohydrate biosynthesis; gluconeogenesis.</text>
</comment>
<comment type="pathway">
    <text>Carbohydrate degradation; glycolysis; D-glyceraldehyde 3-phosphate from glycerone phosphate: step 1/1.</text>
</comment>
<comment type="subunit">
    <text>Homodimer.</text>
</comment>
<comment type="alternative products">
    <event type="alternative splicing"/>
    <isoform>
        <id>P29613-2</id>
        <name>B</name>
        <name>C</name>
        <sequence type="displayed"/>
    </isoform>
    <isoform>
        <id>P29613-1</id>
        <name>A</name>
        <sequence type="described" ref="VSP_015659"/>
    </isoform>
</comment>
<comment type="developmental stage">
    <text evidence="2">Present in substantial amounts in oocytes, declines in abundance in early embryos, and begins to increase during mid-embryogenesis. Levels peak in the third instar larva then decline during pupal stages, rising again near the time of eclosion.</text>
</comment>
<comment type="similarity">
    <text evidence="5">Belongs to the triosephosphate isomerase family.</text>
</comment>
<evidence type="ECO:0000250" key="1"/>
<evidence type="ECO:0000269" key="2">
    <source>
    </source>
</evidence>
<evidence type="ECO:0000269" key="3">
    <source>
    </source>
</evidence>
<evidence type="ECO:0000303" key="4">
    <source ref="5"/>
</evidence>
<evidence type="ECO:0000305" key="5"/>
<name>TPIS_DROME</name>